<feature type="chain" id="PRO_0000460961" description="Histone-lysine N-methyltransferase EZH2">
    <location>
        <begin position="1"/>
        <end position="1522"/>
    </location>
</feature>
<feature type="domain" description="CXC" evidence="3 5">
    <location>
        <begin position="658"/>
        <end position="780"/>
    </location>
</feature>
<feature type="domain" description="SET" evidence="2 5">
    <location>
        <begin position="795"/>
        <end position="919"/>
    </location>
</feature>
<feature type="region of interest" description="Disordered" evidence="4">
    <location>
        <begin position="1"/>
        <end position="196"/>
    </location>
</feature>
<feature type="region of interest" description="SBD domain" evidence="5">
    <location>
        <begin position="190"/>
        <end position="220"/>
    </location>
</feature>
<feature type="region of interest" description="EBD domain" evidence="5">
    <location>
        <begin position="221"/>
        <end position="250"/>
    </location>
</feature>
<feature type="region of interest" description="BAM domain" evidence="5 7">
    <location>
        <begin position="251"/>
        <end position="300"/>
    </location>
</feature>
<feature type="region of interest" description="SAL domain" evidence="5">
    <location>
        <begin position="301"/>
        <end position="320"/>
    </location>
</feature>
<feature type="region of interest" description="SRM domain" evidence="5">
    <location>
        <begin position="321"/>
        <end position="360"/>
    </location>
</feature>
<feature type="region of interest" description="SANT1L domain" evidence="5">
    <location>
        <begin position="361"/>
        <end position="480"/>
    </location>
</feature>
<feature type="region of interest" description="Disordered" evidence="4">
    <location>
        <begin position="406"/>
        <end position="426"/>
    </location>
</feature>
<feature type="region of interest" description="MCSS domain" evidence="5">
    <location>
        <begin position="481"/>
        <end position="560"/>
    </location>
</feature>
<feature type="region of interest" description="SANT2L domain" evidence="5">
    <location>
        <begin position="561"/>
        <end position="650"/>
    </location>
</feature>
<feature type="region of interest" description="Disordered" evidence="4">
    <location>
        <begin position="933"/>
        <end position="1522"/>
    </location>
</feature>
<feature type="compositionally biased region" description="Basic and acidic residues" evidence="4">
    <location>
        <begin position="39"/>
        <end position="61"/>
    </location>
</feature>
<feature type="compositionally biased region" description="Low complexity" evidence="4">
    <location>
        <begin position="64"/>
        <end position="76"/>
    </location>
</feature>
<feature type="compositionally biased region" description="Low complexity" evidence="4">
    <location>
        <begin position="103"/>
        <end position="130"/>
    </location>
</feature>
<feature type="compositionally biased region" description="Polar residues" evidence="4">
    <location>
        <begin position="141"/>
        <end position="162"/>
    </location>
</feature>
<feature type="compositionally biased region" description="Low complexity" evidence="4">
    <location>
        <begin position="180"/>
        <end position="195"/>
    </location>
</feature>
<feature type="compositionally biased region" description="Polar residues" evidence="4">
    <location>
        <begin position="411"/>
        <end position="422"/>
    </location>
</feature>
<feature type="compositionally biased region" description="Polar residues" evidence="4">
    <location>
        <begin position="935"/>
        <end position="946"/>
    </location>
</feature>
<feature type="compositionally biased region" description="Acidic residues" evidence="4">
    <location>
        <begin position="971"/>
        <end position="988"/>
    </location>
</feature>
<feature type="compositionally biased region" description="Low complexity" evidence="4">
    <location>
        <begin position="992"/>
        <end position="1024"/>
    </location>
</feature>
<feature type="compositionally biased region" description="Polar residues" evidence="4">
    <location>
        <begin position="1025"/>
        <end position="1038"/>
    </location>
</feature>
<feature type="compositionally biased region" description="Basic and acidic residues" evidence="4">
    <location>
        <begin position="1053"/>
        <end position="1066"/>
    </location>
</feature>
<feature type="compositionally biased region" description="Low complexity" evidence="4">
    <location>
        <begin position="1072"/>
        <end position="1091"/>
    </location>
</feature>
<feature type="compositionally biased region" description="Polar residues" evidence="4">
    <location>
        <begin position="1127"/>
        <end position="1136"/>
    </location>
</feature>
<feature type="compositionally biased region" description="Basic residues" evidence="4">
    <location>
        <begin position="1142"/>
        <end position="1162"/>
    </location>
</feature>
<feature type="compositionally biased region" description="Basic and acidic residues" evidence="4">
    <location>
        <begin position="1207"/>
        <end position="1221"/>
    </location>
</feature>
<feature type="compositionally biased region" description="Basic and acidic residues" evidence="4">
    <location>
        <begin position="1228"/>
        <end position="1238"/>
    </location>
</feature>
<feature type="compositionally biased region" description="Low complexity" evidence="4">
    <location>
        <begin position="1255"/>
        <end position="1299"/>
    </location>
</feature>
<feature type="compositionally biased region" description="Polar residues" evidence="4">
    <location>
        <begin position="1316"/>
        <end position="1330"/>
    </location>
</feature>
<feature type="compositionally biased region" description="Low complexity" evidence="4">
    <location>
        <begin position="1355"/>
        <end position="1385"/>
    </location>
</feature>
<feature type="compositionally biased region" description="Low complexity" evidence="4">
    <location>
        <begin position="1415"/>
        <end position="1428"/>
    </location>
</feature>
<feature type="compositionally biased region" description="Polar residues" evidence="4">
    <location>
        <begin position="1455"/>
        <end position="1464"/>
    </location>
</feature>
<feature type="compositionally biased region" description="Basic and acidic residues" evidence="4">
    <location>
        <begin position="1465"/>
        <end position="1494"/>
    </location>
</feature>
<feature type="binding site" evidence="5 6 8 11 12 13 14 15 16 17 18 19 20">
    <location>
        <position position="508"/>
    </location>
    <ligand>
        <name>Zn(2+)</name>
        <dbReference type="ChEBI" id="CHEBI:29105"/>
        <label>1</label>
    </ligand>
</feature>
<feature type="binding site" evidence="5 6 8 11 12 13 14 15 16 17 18 19 20">
    <location>
        <position position="511"/>
    </location>
    <ligand>
        <name>Zn(2+)</name>
        <dbReference type="ChEBI" id="CHEBI:29105"/>
        <label>1</label>
    </ligand>
</feature>
<feature type="binding site" evidence="5 6 8 11 12 13 14 15 16 17 18 19 20">
    <location>
        <position position="516"/>
    </location>
    <ligand>
        <name>Zn(2+)</name>
        <dbReference type="ChEBI" id="CHEBI:29105"/>
        <label>1</label>
    </ligand>
</feature>
<feature type="binding site" evidence="5 6 8 11 12 13 14 15 16 17 18 19 20">
    <location>
        <position position="518"/>
    </location>
    <ligand>
        <name>Zn(2+)</name>
        <dbReference type="ChEBI" id="CHEBI:29105"/>
        <label>1</label>
    </ligand>
</feature>
<feature type="binding site" evidence="5 6 8 11 12 13 15 16 17 18 19 20">
    <location>
        <position position="570"/>
    </location>
    <ligand>
        <name>Zn(2+)</name>
        <dbReference type="ChEBI" id="CHEBI:29105"/>
        <label>2</label>
    </ligand>
</feature>
<feature type="binding site" evidence="5 6 8 11 12 13 14 15 16 17 18 19 20">
    <location>
        <position position="574"/>
    </location>
    <ligand>
        <name>Zn(2+)</name>
        <dbReference type="ChEBI" id="CHEBI:29105"/>
        <label>2</label>
    </ligand>
</feature>
<feature type="binding site" evidence="5 6 8 11 12 13 14 15 16 17 18 19 20">
    <location>
        <position position="615"/>
    </location>
    <ligand>
        <name>Zn(2+)</name>
        <dbReference type="ChEBI" id="CHEBI:29105"/>
        <label>2</label>
    </ligand>
</feature>
<feature type="binding site" evidence="5 6 8 11 12 13 14 15 16 17 18 19 20">
    <location>
        <position position="625"/>
    </location>
    <ligand>
        <name>Zn(2+)</name>
        <dbReference type="ChEBI" id="CHEBI:29105"/>
        <label>2</label>
    </ligand>
</feature>
<feature type="binding site" evidence="5 6 8 11 12 13 14 15 16 17 18 19 20">
    <location>
        <position position="685"/>
    </location>
    <ligand>
        <name>Zn(2+)</name>
        <dbReference type="ChEBI" id="CHEBI:29105"/>
        <label>3</label>
    </ligand>
</feature>
<feature type="binding site" evidence="5 6 8 11 12 13 14 15 16 17 18 19 20">
    <location>
        <position position="685"/>
    </location>
    <ligand>
        <name>Zn(2+)</name>
        <dbReference type="ChEBI" id="CHEBI:29105"/>
        <label>4</label>
    </ligand>
</feature>
<feature type="binding site" evidence="5 6 8 11 12 13 14 15 16 17 18 19 20">
    <location>
        <position position="687"/>
    </location>
    <ligand>
        <name>Zn(2+)</name>
        <dbReference type="ChEBI" id="CHEBI:29105"/>
        <label>3</label>
    </ligand>
</feature>
<feature type="binding site" evidence="5 6 8 11 12 13 14 15 16 17 18 19 20">
    <location>
        <position position="691"/>
    </location>
    <ligand>
        <name>Zn(2+)</name>
        <dbReference type="ChEBI" id="CHEBI:29105"/>
        <label>3</label>
    </ligand>
</feature>
<feature type="binding site" evidence="5 6 8 11 12 13 14 15 16 17 18 19 20">
    <location>
        <position position="691"/>
    </location>
    <ligand>
        <name>Zn(2+)</name>
        <dbReference type="ChEBI" id="CHEBI:29105"/>
        <label>5</label>
    </ligand>
</feature>
<feature type="binding site" evidence="5 6 8 11 12 13 14 15 16 17 18 19 20">
    <location>
        <position position="697"/>
    </location>
    <ligand>
        <name>Zn(2+)</name>
        <dbReference type="ChEBI" id="CHEBI:29105"/>
        <label>3</label>
    </ligand>
</feature>
<feature type="binding site" evidence="5 6 8 11 12 13 14 15 16 17 18 19 20">
    <location>
        <position position="699"/>
    </location>
    <ligand>
        <name>Zn(2+)</name>
        <dbReference type="ChEBI" id="CHEBI:29105"/>
        <label>4</label>
    </ligand>
</feature>
<feature type="binding site" evidence="5 6 8 11 12 13 14 15 16 17 18 19 20">
    <location>
        <position position="709"/>
    </location>
    <ligand>
        <name>Zn(2+)</name>
        <dbReference type="ChEBI" id="CHEBI:29105"/>
        <label>4</label>
    </ligand>
</feature>
<feature type="binding site" evidence="5 6 8 11 12 13 14 15 16 17 18 19 20">
    <location>
        <position position="709"/>
    </location>
    <ligand>
        <name>Zn(2+)</name>
        <dbReference type="ChEBI" id="CHEBI:29105"/>
        <label>5</label>
    </ligand>
</feature>
<feature type="binding site" evidence="5 6 8 11 12 13 14 15 16 17 18 19 20">
    <location>
        <position position="713"/>
    </location>
    <ligand>
        <name>Zn(2+)</name>
        <dbReference type="ChEBI" id="CHEBI:29105"/>
        <label>4</label>
    </ligand>
</feature>
<feature type="binding site" evidence="5 6 8 11 12 13 14 15 16 17 18 19 20">
    <location>
        <position position="715"/>
    </location>
    <ligand>
        <name>Zn(2+)</name>
        <dbReference type="ChEBI" id="CHEBI:29105"/>
        <label>5</label>
    </ligand>
</feature>
<feature type="binding site" evidence="5 6 8 11 12 13 14 15 16 17 18 19 20">
    <location>
        <position position="720"/>
    </location>
    <ligand>
        <name>Zn(2+)</name>
        <dbReference type="ChEBI" id="CHEBI:29105"/>
        <label>5</label>
    </ligand>
</feature>
<feature type="binding site" evidence="5 6 8 11 12 13 14 15 16 17 18 19 20">
    <location>
        <position position="727"/>
    </location>
    <ligand>
        <name>Zn(2+)</name>
        <dbReference type="ChEBI" id="CHEBI:29105"/>
        <label>6</label>
    </ligand>
</feature>
<feature type="binding site" evidence="5 6 8 11 12 13 14 15 16 17 18 19 20">
    <location>
        <position position="727"/>
    </location>
    <ligand>
        <name>Zn(2+)</name>
        <dbReference type="ChEBI" id="CHEBI:29105"/>
        <label>7</label>
    </ligand>
</feature>
<feature type="binding site" evidence="5 6 8 11 12 13 14 15 16 17 18 19 20">
    <location>
        <position position="729"/>
    </location>
    <ligand>
        <name>Zn(2+)</name>
        <dbReference type="ChEBI" id="CHEBI:29105"/>
        <label>6</label>
    </ligand>
</feature>
<feature type="binding site" evidence="5 6 8 11 12 13 14 15 16 17 18 19 20">
    <location>
        <position position="736"/>
    </location>
    <ligand>
        <name>Zn(2+)</name>
        <dbReference type="ChEBI" id="CHEBI:29105"/>
        <label>6</label>
    </ligand>
</feature>
<feature type="binding site" evidence="5 6 8 11 12 13 14 15 16 17 18 19 20">
    <location>
        <position position="736"/>
    </location>
    <ligand>
        <name>Zn(2+)</name>
        <dbReference type="ChEBI" id="CHEBI:29105"/>
        <label>8</label>
    </ligand>
</feature>
<feature type="binding site" evidence="5 6 8 11 12 13 14 15 16 17 18 19 20">
    <location>
        <position position="746"/>
    </location>
    <ligand>
        <name>Zn(2+)</name>
        <dbReference type="ChEBI" id="CHEBI:29105"/>
        <label>6</label>
    </ligand>
</feature>
<feature type="binding site" evidence="5 6 8 11 12 13 14 15 16 17 18 19 20">
    <location>
        <position position="748"/>
    </location>
    <ligand>
        <name>Zn(2+)</name>
        <dbReference type="ChEBI" id="CHEBI:29105"/>
        <label>7</label>
    </ligand>
</feature>
<feature type="binding site" evidence="5 6 8 11 12 13 14 15 16 17 18 19 20">
    <location>
        <position position="755"/>
    </location>
    <ligand>
        <name>Zn(2+)</name>
        <dbReference type="ChEBI" id="CHEBI:29105"/>
        <label>7</label>
    </ligand>
</feature>
<feature type="binding site" evidence="5 6 8 11 12 13 14 15 16 17 18 19 20">
    <location>
        <position position="755"/>
    </location>
    <ligand>
        <name>Zn(2+)</name>
        <dbReference type="ChEBI" id="CHEBI:29105"/>
        <label>8</label>
    </ligand>
</feature>
<feature type="binding site" evidence="5 6 8 11 12 13 14 15 16 17 18 19 20">
    <location>
        <position position="760"/>
    </location>
    <ligand>
        <name>Zn(2+)</name>
        <dbReference type="ChEBI" id="CHEBI:29105"/>
        <label>7</label>
    </ligand>
</feature>
<feature type="binding site" evidence="5 6 8 11 12 13 15 16 17 18 19 20">
    <location>
        <position position="763"/>
    </location>
    <ligand>
        <name>Zn(2+)</name>
        <dbReference type="ChEBI" id="CHEBI:29105"/>
        <label>8</label>
    </ligand>
</feature>
<feature type="binding site" evidence="5 6 8 11 12 13 14 15 16 17 18 19">
    <location>
        <position position="784"/>
    </location>
    <ligand>
        <name>Zn(2+)</name>
        <dbReference type="ChEBI" id="CHEBI:29105"/>
        <label>8</label>
    </ligand>
</feature>
<feature type="binding site" evidence="5 12 13 15">
    <location>
        <position position="809"/>
    </location>
    <ligand>
        <name>S-adenosyl-L-homocysteine</name>
        <dbReference type="ChEBI" id="CHEBI:57856"/>
    </ligand>
</feature>
<feature type="binding site" evidence="5 6 14 16">
    <location>
        <position position="809"/>
    </location>
    <ligand>
        <name>S-adenosyl-L-methionine</name>
        <dbReference type="ChEBI" id="CHEBI:59789"/>
    </ligand>
</feature>
<feature type="binding site" evidence="5 12 13 15">
    <location>
        <position position="852"/>
    </location>
    <ligand>
        <name>S-adenosyl-L-homocysteine</name>
        <dbReference type="ChEBI" id="CHEBI:57856"/>
    </ligand>
</feature>
<feature type="binding site" evidence="5 6 16">
    <location>
        <position position="852"/>
    </location>
    <ligand>
        <name>S-adenosyl-L-methionine</name>
        <dbReference type="ChEBI" id="CHEBI:59789"/>
    </ligand>
</feature>
<feature type="binding site" evidence="5 12 13 15">
    <location>
        <position position="854"/>
    </location>
    <ligand>
        <name>S-adenosyl-L-homocysteine</name>
        <dbReference type="ChEBI" id="CHEBI:57856"/>
    </ligand>
</feature>
<feature type="binding site" evidence="5 6 14 16">
    <location>
        <position position="854"/>
    </location>
    <ligand>
        <name>S-adenosyl-L-methionine</name>
        <dbReference type="ChEBI" id="CHEBI:59789"/>
    </ligand>
</feature>
<feature type="binding site" evidence="5 12 13 15">
    <location>
        <position position="855"/>
    </location>
    <ligand>
        <name>S-adenosyl-L-homocysteine</name>
        <dbReference type="ChEBI" id="CHEBI:57856"/>
    </ligand>
</feature>
<feature type="binding site" evidence="5 6 14 16">
    <location>
        <position position="855"/>
    </location>
    <ligand>
        <name>S-adenosyl-L-methionine</name>
        <dbReference type="ChEBI" id="CHEBI:59789"/>
    </ligand>
</feature>
<feature type="binding site" evidence="5 14">
    <location>
        <position position="880"/>
    </location>
    <ligand>
        <name>S-adenosyl-L-methionine</name>
        <dbReference type="ChEBI" id="CHEBI:59789"/>
    </ligand>
</feature>
<feature type="binding site" evidence="5 12 13 15">
    <location>
        <position position="881"/>
    </location>
    <ligand>
        <name>S-adenosyl-L-homocysteine</name>
        <dbReference type="ChEBI" id="CHEBI:57856"/>
    </ligand>
</feature>
<feature type="binding site" evidence="5 6 14 16">
    <location>
        <position position="881"/>
    </location>
    <ligand>
        <name>S-adenosyl-L-methionine</name>
        <dbReference type="ChEBI" id="CHEBI:59789"/>
    </ligand>
</feature>
<feature type="binding site" evidence="5 14">
    <location>
        <position position="926"/>
    </location>
    <ligand>
        <name>S-adenosyl-L-methionine</name>
        <dbReference type="ChEBI" id="CHEBI:59789"/>
    </ligand>
</feature>
<feature type="binding site" evidence="5 12 13 15">
    <location>
        <position position="927"/>
    </location>
    <ligand>
        <name>S-adenosyl-L-homocysteine</name>
        <dbReference type="ChEBI" id="CHEBI:57856"/>
    </ligand>
</feature>
<feature type="mutagenesis site" description="Causes significant reduction in RNA-binding but does not affect the catalytic activity." evidence="7">
    <original>DVKFKQH</original>
    <variation>AVAFAQA</variation>
    <location>
        <begin position="266"/>
        <end position="272"/>
    </location>
</feature>
<feature type="mutagenesis site" description="Does not affect RNA-binfing but leads to a reduction in catalytic activity." evidence="7">
    <original>RRFQY</original>
    <variation>GGSGG</variation>
    <location>
        <begin position="284"/>
        <end position="288"/>
    </location>
</feature>
<feature type="mutagenesis site" description="Impairs allosteric activation by H3K27me3." evidence="5">
    <original>P</original>
    <variation>S</variation>
    <location>
        <position position="325"/>
    </location>
</feature>
<feature type="mutagenesis site" description="Impairs allosteric activation by H3K27me3." evidence="5">
    <original>H</original>
    <variation>A</variation>
    <location>
        <position position="326"/>
    </location>
</feature>
<feature type="mutagenesis site" description="Impairs allosteric activation by H3K27me3." evidence="5">
    <original>D</original>
    <variation>A</variation>
    <location>
        <position position="329"/>
    </location>
</feature>
<feature type="mutagenesis site" description="Impairs allosteric activation by H3K27me3." evidence="5">
    <location>
        <position position="350"/>
    </location>
</feature>
<feature type="mutagenesis site" description="Impairs allosteric activation by H3K27me3." evidence="5">
    <original>R</original>
    <variation>D</variation>
    <location>
        <position position="839"/>
    </location>
</feature>
<feature type="mutagenesis site" description="Leads to loss of the autoinhibition and enhanced catalysis toward all the methylation states of H3K27; when associated with D-852." evidence="6">
    <original>E</original>
    <variation>A</variation>
    <location>
        <position position="840"/>
    </location>
</feature>
<feature type="mutagenesis site" description="Leads to loss of the autoinhibition and enhanced catalysis toward all the methylation states of H3K27; when associated with A-840." evidence="6">
    <original>K</original>
    <variation>D</variation>
    <location>
        <position position="852"/>
    </location>
</feature>
<feature type="mutagenesis site" description="Leads to a complete loss of activity." evidence="6">
    <original>F</original>
    <variation>A</variation>
    <location>
        <position position="922"/>
    </location>
</feature>
<feature type="helix" evidence="26">
    <location>
        <begin position="199"/>
        <end position="209"/>
    </location>
</feature>
<feature type="helix" evidence="26">
    <location>
        <begin position="212"/>
        <end position="230"/>
    </location>
</feature>
<feature type="turn" evidence="26">
    <location>
        <begin position="243"/>
        <end position="246"/>
    </location>
</feature>
<feature type="strand" evidence="22">
    <location>
        <begin position="260"/>
        <end position="262"/>
    </location>
</feature>
<feature type="strand" evidence="26">
    <location>
        <begin position="264"/>
        <end position="273"/>
    </location>
</feature>
<feature type="turn" evidence="26">
    <location>
        <begin position="274"/>
        <end position="277"/>
    </location>
</feature>
<feature type="strand" evidence="26">
    <location>
        <begin position="278"/>
        <end position="282"/>
    </location>
</feature>
<feature type="strand" evidence="26">
    <location>
        <begin position="284"/>
        <end position="289"/>
    </location>
</feature>
<feature type="strand" evidence="26">
    <location>
        <begin position="291"/>
        <end position="293"/>
    </location>
</feature>
<feature type="helix" evidence="22">
    <location>
        <begin position="335"/>
        <end position="354"/>
    </location>
</feature>
<feature type="helix" evidence="26">
    <location>
        <begin position="361"/>
        <end position="377"/>
    </location>
</feature>
<feature type="helix" evidence="26">
    <location>
        <begin position="378"/>
        <end position="380"/>
    </location>
</feature>
<feature type="helix" evidence="26">
    <location>
        <begin position="381"/>
        <end position="388"/>
    </location>
</feature>
<feature type="helix" evidence="26">
    <location>
        <begin position="395"/>
        <end position="404"/>
    </location>
</feature>
<feature type="helix" evidence="26">
    <location>
        <begin position="406"/>
        <end position="408"/>
    </location>
</feature>
<feature type="turn" evidence="26">
    <location>
        <begin position="409"/>
        <end position="411"/>
    </location>
</feature>
<feature type="helix" evidence="26">
    <location>
        <begin position="414"/>
        <end position="423"/>
    </location>
</feature>
<feature type="helix" evidence="26">
    <location>
        <begin position="431"/>
        <end position="448"/>
    </location>
</feature>
<feature type="helix" evidence="26">
    <location>
        <begin position="459"/>
        <end position="463"/>
    </location>
</feature>
<feature type="turn" evidence="26">
    <location>
        <begin position="467"/>
        <end position="469"/>
    </location>
</feature>
<feature type="helix" evidence="26">
    <location>
        <begin position="470"/>
        <end position="473"/>
    </location>
</feature>
<feature type="helix" evidence="26">
    <location>
        <begin position="492"/>
        <end position="499"/>
    </location>
</feature>
<feature type="helix" evidence="26">
    <location>
        <begin position="501"/>
        <end position="506"/>
    </location>
</feature>
<feature type="turn" evidence="26">
    <location>
        <begin position="509"/>
        <end position="511"/>
    </location>
</feature>
<feature type="strand" evidence="22">
    <location>
        <begin position="514"/>
        <end position="517"/>
    </location>
</feature>
<feature type="strand" evidence="26">
    <location>
        <begin position="519"/>
        <end position="521"/>
    </location>
</feature>
<feature type="strand" evidence="23">
    <location>
        <begin position="523"/>
        <end position="525"/>
    </location>
</feature>
<feature type="helix" evidence="26">
    <location>
        <begin position="532"/>
        <end position="535"/>
    </location>
</feature>
<feature type="helix" evidence="26">
    <location>
        <begin position="538"/>
        <end position="550"/>
    </location>
</feature>
<feature type="turn" evidence="24">
    <location>
        <begin position="553"/>
        <end position="555"/>
    </location>
</feature>
<feature type="turn" evidence="26">
    <location>
        <begin position="571"/>
        <end position="573"/>
    </location>
</feature>
<feature type="turn" evidence="26">
    <location>
        <begin position="575"/>
        <end position="577"/>
    </location>
</feature>
<feature type="strand" evidence="24">
    <location>
        <begin position="579"/>
        <end position="581"/>
    </location>
</feature>
<feature type="helix" evidence="26">
    <location>
        <begin position="592"/>
        <end position="605"/>
    </location>
</feature>
<feature type="helix" evidence="26">
    <location>
        <begin position="613"/>
        <end position="620"/>
    </location>
</feature>
<feature type="helix" evidence="26">
    <location>
        <begin position="630"/>
        <end position="635"/>
    </location>
</feature>
<feature type="turn" evidence="26">
    <location>
        <begin position="658"/>
        <end position="661"/>
    </location>
</feature>
<feature type="helix" evidence="26">
    <location>
        <begin position="667"/>
        <end position="670"/>
    </location>
</feature>
<feature type="helix" evidence="26">
    <location>
        <begin position="676"/>
        <end position="678"/>
    </location>
</feature>
<feature type="helix" evidence="26">
    <location>
        <begin position="693"/>
        <end position="695"/>
    </location>
</feature>
<feature type="helix" evidence="26">
    <location>
        <begin position="698"/>
        <end position="701"/>
    </location>
</feature>
<feature type="strand" evidence="26">
    <location>
        <begin position="702"/>
        <end position="705"/>
    </location>
</feature>
<feature type="strand" evidence="26">
    <location>
        <begin position="713"/>
        <end position="715"/>
    </location>
</feature>
<feature type="turn" evidence="26">
    <location>
        <begin position="717"/>
        <end position="719"/>
    </location>
</feature>
<feature type="strand" evidence="26">
    <location>
        <begin position="732"/>
        <end position="736"/>
    </location>
</feature>
<feature type="strand" evidence="25">
    <location>
        <begin position="741"/>
        <end position="744"/>
    </location>
</feature>
<feature type="helix" evidence="26">
    <location>
        <begin position="747"/>
        <end position="750"/>
    </location>
</feature>
<feature type="turn" evidence="26">
    <location>
        <begin position="757"/>
        <end position="759"/>
    </location>
</feature>
<feature type="turn" evidence="26">
    <location>
        <begin position="761"/>
        <end position="764"/>
    </location>
</feature>
<feature type="helix" evidence="26">
    <location>
        <begin position="765"/>
        <end position="768"/>
    </location>
</feature>
<feature type="helix" evidence="26">
    <location>
        <begin position="771"/>
        <end position="773"/>
    </location>
</feature>
<feature type="helix" evidence="26">
    <location>
        <begin position="777"/>
        <end position="780"/>
    </location>
</feature>
<feature type="strand" evidence="26">
    <location>
        <begin position="782"/>
        <end position="784"/>
    </location>
</feature>
<feature type="helix" evidence="26">
    <location>
        <begin position="788"/>
        <end position="791"/>
    </location>
</feature>
<feature type="strand" evidence="26">
    <location>
        <begin position="797"/>
        <end position="801"/>
    </location>
</feature>
<feature type="strand" evidence="26">
    <location>
        <begin position="809"/>
        <end position="815"/>
    </location>
</feature>
<feature type="strand" evidence="26">
    <location>
        <begin position="822"/>
        <end position="826"/>
    </location>
</feature>
<feature type="strand" evidence="26">
    <location>
        <begin position="829"/>
        <end position="831"/>
    </location>
</feature>
<feature type="helix" evidence="26">
    <location>
        <begin position="833"/>
        <end position="843"/>
    </location>
</feature>
<feature type="strand" evidence="26">
    <location>
        <begin position="856"/>
        <end position="860"/>
    </location>
</feature>
<feature type="turn" evidence="26">
    <location>
        <begin position="861"/>
        <end position="864"/>
    </location>
</feature>
<feature type="strand" evidence="26">
    <location>
        <begin position="865"/>
        <end position="868"/>
    </location>
</feature>
<feature type="strand" evidence="26">
    <location>
        <begin position="870"/>
        <end position="873"/>
    </location>
</feature>
<feature type="helix" evidence="26">
    <location>
        <begin position="875"/>
        <end position="878"/>
    </location>
</feature>
<feature type="strand" evidence="26">
    <location>
        <begin position="886"/>
        <end position="894"/>
    </location>
</feature>
<feature type="strand" evidence="26">
    <location>
        <begin position="897"/>
        <end position="906"/>
    </location>
</feature>
<feature type="helix" evidence="21">
    <location>
        <begin position="925"/>
        <end position="931"/>
    </location>
</feature>
<accession>G0SDW4</accession>
<organism>
    <name type="scientific">Chaetomium thermophilum (strain DSM 1495 / CBS 144.50 / IMI 039719)</name>
    <name type="common">Thermochaetoides thermophila</name>
    <dbReference type="NCBI Taxonomy" id="759272"/>
    <lineage>
        <taxon>Eukaryota</taxon>
        <taxon>Fungi</taxon>
        <taxon>Dikarya</taxon>
        <taxon>Ascomycota</taxon>
        <taxon>Pezizomycotina</taxon>
        <taxon>Sordariomycetes</taxon>
        <taxon>Sordariomycetidae</taxon>
        <taxon>Sordariales</taxon>
        <taxon>Chaetomiaceae</taxon>
        <taxon>Thermochaetoides</taxon>
    </lineage>
</organism>
<evidence type="ECO:0000250" key="1">
    <source>
        <dbReference type="UniProtKB" id="Q15910"/>
    </source>
</evidence>
<evidence type="ECO:0000255" key="2">
    <source>
        <dbReference type="PROSITE-ProRule" id="PRU00190"/>
    </source>
</evidence>
<evidence type="ECO:0000255" key="3">
    <source>
        <dbReference type="PROSITE-ProRule" id="PRU00970"/>
    </source>
</evidence>
<evidence type="ECO:0000256" key="4">
    <source>
        <dbReference type="SAM" id="MobiDB-lite"/>
    </source>
</evidence>
<evidence type="ECO:0000269" key="5">
    <source>
    </source>
</evidence>
<evidence type="ECO:0000269" key="6">
    <source>
    </source>
</evidence>
<evidence type="ECO:0000269" key="7">
    <source>
    </source>
</evidence>
<evidence type="ECO:0000269" key="8">
    <source>
    </source>
</evidence>
<evidence type="ECO:0000303" key="9">
    <source>
    </source>
</evidence>
<evidence type="ECO:0000305" key="10"/>
<evidence type="ECO:0007744" key="11">
    <source>
        <dbReference type="PDB" id="5BJS"/>
    </source>
</evidence>
<evidence type="ECO:0007744" key="12">
    <source>
        <dbReference type="PDB" id="5KJH"/>
    </source>
</evidence>
<evidence type="ECO:0007744" key="13">
    <source>
        <dbReference type="PDB" id="5KJI"/>
    </source>
</evidence>
<evidence type="ECO:0007744" key="14">
    <source>
        <dbReference type="PDB" id="5KKL"/>
    </source>
</evidence>
<evidence type="ECO:0007744" key="15">
    <source>
        <dbReference type="PDB" id="5M5G"/>
    </source>
</evidence>
<evidence type="ECO:0007744" key="16">
    <source>
        <dbReference type="PDB" id="5TQR"/>
    </source>
</evidence>
<evidence type="ECO:0007744" key="17">
    <source>
        <dbReference type="PDB" id="5VK3"/>
    </source>
</evidence>
<evidence type="ECO:0007744" key="18">
    <source>
        <dbReference type="PDB" id="5WF7"/>
    </source>
</evidence>
<evidence type="ECO:0007744" key="19">
    <source>
        <dbReference type="PDB" id="5WFC"/>
    </source>
</evidence>
<evidence type="ECO:0007744" key="20">
    <source>
        <dbReference type="PDB" id="5WFD"/>
    </source>
</evidence>
<evidence type="ECO:0007829" key="21">
    <source>
        <dbReference type="PDB" id="5BJS"/>
    </source>
</evidence>
<evidence type="ECO:0007829" key="22">
    <source>
        <dbReference type="PDB" id="5KJH"/>
    </source>
</evidence>
<evidence type="ECO:0007829" key="23">
    <source>
        <dbReference type="PDB" id="5KJI"/>
    </source>
</evidence>
<evidence type="ECO:0007829" key="24">
    <source>
        <dbReference type="PDB" id="5KKL"/>
    </source>
</evidence>
<evidence type="ECO:0007829" key="25">
    <source>
        <dbReference type="PDB" id="5TQR"/>
    </source>
</evidence>
<evidence type="ECO:0007829" key="26">
    <source>
        <dbReference type="PDB" id="5VK3"/>
    </source>
</evidence>
<proteinExistence type="evidence at protein level"/>
<keyword id="KW-0002">3D-structure</keyword>
<keyword id="KW-0156">Chromatin regulator</keyword>
<keyword id="KW-0479">Metal-binding</keyword>
<keyword id="KW-0489">Methyltransferase</keyword>
<keyword id="KW-0539">Nucleus</keyword>
<keyword id="KW-1185">Reference proteome</keyword>
<keyword id="KW-0677">Repeat</keyword>
<keyword id="KW-0678">Repressor</keyword>
<keyword id="KW-0949">S-adenosyl-L-methionine</keyword>
<keyword id="KW-0804">Transcription</keyword>
<keyword id="KW-0805">Transcription regulation</keyword>
<keyword id="KW-0808">Transferase</keyword>
<keyword id="KW-0862">Zinc</keyword>
<name>EZH2_CHATD</name>
<sequence>MSPARGDANASVARASGGSSNGAVTADEVVVQVDDSDENRENLRDRDRADKLEKLEKDAHARSQTQTQVQAPPVTVSSFRSANGDAIRAYRSETALTMKPRPRGSTSSTPTTTIPPLRPGRPSSPESPSLKRLSPRYSPTILASRTSRFSNRTGIRDSQSPSPILADEMVGRESLRKRPATSNTPAPKTPTPKNTEWTVDKIASALSVLAEEVPQNHSRLVNFLLEETEKRAPQPRHLSKTDPFAHMKSKAIDANRPRPEGVPTMDVKFKQHSGEYGKSRNSGRRFQYPVVCIKPDREPVPPYRFHHAEIRKNILALNSQLNFVPHLRDVDPNSAEEQKYSAWLMDLENLDSKSGFKIQPRSQKIAKRAQAEYAATLAPYLEPWLRKLNIEGCTKSNLIRFMASQPESDDSMTPQQKSNLLDTYSDDMGSPQAVRNASMFTEAWDRVFNDQSKLRRVALRDILMLDKNVEPIFDNKRAKDAPGSQKPPDEALMQKVIDALGSYTTLGCLICFSHDCEHGEIERDNQKRCFSLEEIGGLMPSLRRKWAAQIEQRQKTEGGSANAPPAHPPCRNECYRIHGTGDPNQQVPPWSENEVGTLEWMFATIGYSQTLRPECFVGAILGRPCWDVHRKLQELDLRLPPVEPRTIPKQKSLPWYDRRKKQLMSDWADATITHEHAVRELFAPCHHDGPCTAANGCPCASAGTHPVLCERFCLCTAEECPLKFTGCACHSSGKTCLQRQREGRPCICVQLNRECDPTLCKGCGARERADPENAYDEVLHSTGCQNVALQRGAAKAVVLGKSQLEACGYGLFAAEDIEEGEFVIEYTGELISHDEGVRREHRRGDVFDEENKVSYLFTLLEQEGIWVDAAIYGNLSRYINHATDGNIMPKIMYVNHEWRIKFTAIKDIKAGEELFFNYGDNFPNLTKKLVERNEQSGAETTPQQPKRANGAATQRATARKTTSKAKGEGIGFDDDDRDGNDSDPDDLWMGDQQQQQQQQQQQQQQQQQQQQQQQQQQQQQQQQQAQKPQPSTSHQPQSRAERSSTETGSEEISPDKQLRRENHDAQRQLLHQFQQQEQQQQQQQQQQQQQQTLPRKEPKKEELEEEIDLDAPRRSRLKRRLEALKGDSSSGGSANEQPPVKKPSRRGGARPGAGRKPKHRPPGAKGKDSKGKKGPSSSAGATTGAGSGESSGVNETGEEEVAVNGKSDSKDEAKEEETDKEKEEDEKVNEKDREKGRDSLSSPTEEPIAFLPVTKSAPSPAKKQASSPTKISDSNRTTSKNTSSNNNNNTNNNNNNNNNEFPSPVISPRKTRSSDHLTNSQPAALSPSATTRKRKASDLTSDTHLSAAGKGSDPSTMTTTTTTTTTTTSSSSSSSSSSSSSSSSSKAQPILEEKGDDDDENNEPITSPLKRQKTSSSLSSSHSMSVFSEAKEGVNGAVPGSGRNLRSSGVKVDSSGLNSTSLSQERGEKHEKHEKEKPKEKKGEKERERERDRSEEADEELLPMDRSMRKRQKPARYRDEGE</sequence>
<gene>
    <name evidence="9" type="primary">EZH2</name>
    <name type="ORF">CTHT_0053230</name>
</gene>
<protein>
    <recommendedName>
        <fullName evidence="9">Histone-lysine N-methyltransferase EZH2</fullName>
        <ecNumber evidence="5 6">2.1.1.356</ecNumber>
    </recommendedName>
    <alternativeName>
        <fullName evidence="9">Enhancer of zeste homolog 2</fullName>
    </alternativeName>
</protein>
<reference key="1">
    <citation type="journal article" date="2011" name="Cell">
        <title>Insight into structure and assembly of the nuclear pore complex by utilizing the genome of a eukaryotic thermophile.</title>
        <authorList>
            <person name="Amlacher S."/>
            <person name="Sarges P."/>
            <person name="Flemming D."/>
            <person name="van Noort V."/>
            <person name="Kunze R."/>
            <person name="Devos D.P."/>
            <person name="Arumugam M."/>
            <person name="Bork P."/>
            <person name="Hurt E."/>
        </authorList>
    </citation>
    <scope>NUCLEOTIDE SEQUENCE [LARGE SCALE GENOMIC DNA]</scope>
    <source>
        <strain>DSM 1495 / CBS 144.50 / IMI 039719</strain>
    </source>
</reference>
<reference key="2">
    <citation type="journal article" date="2016" name="Science">
        <title>Comment on 'Structural basis of histone H3K27 trimethylation by an active polycomb repressive complex 2'.</title>
        <authorList>
            <person name="Zhang Y."/>
            <person name="Justin N."/>
            <person name="Wilson J.R."/>
            <person name="Gamblin S.J."/>
        </authorList>
    </citation>
    <scope>FUNCTION</scope>
</reference>
<reference key="3">
    <citation type="journal article" date="2017" name="Elife">
        <title>Conserved RNA-binding specificity of polycomb repressive complex 2 is achieved by dispersed amino acid patches in EZH2.</title>
        <authorList>
            <person name="Long Y."/>
            <person name="Bolanos B."/>
            <person name="Gong L."/>
            <person name="Liu W."/>
            <person name="Goodrich K.J."/>
            <person name="Yang X."/>
            <person name="Chen S."/>
            <person name="Gooding A.R."/>
            <person name="Maegley K.A."/>
            <person name="Gajiwala K.S."/>
            <person name="Brooun A."/>
            <person name="Cech T.R."/>
            <person name="Liu X."/>
        </authorList>
    </citation>
    <scope>FUNCTION</scope>
    <scope>DOMAIN</scope>
    <scope>RNA-BINDING</scope>
    <scope>MUTAGENESIS OF 266-ASP--HIS-272 AND 284-ARG--TYR-288</scope>
</reference>
<reference evidence="12 13 14 15" key="4">
    <citation type="journal article" date="2015" name="Science">
        <title>Structural basis of histone H3K27 trimethylation by an active polycomb repressive complex 2.</title>
        <authorList>
            <person name="Jiao L."/>
            <person name="Liu X."/>
        </authorList>
    </citation>
    <scope>FUNCTION</scope>
    <scope>DOMAIN</scope>
    <scope>SUBUNIT</scope>
    <scope>CATALYTIC ACTIVITY</scope>
    <scope>ACTIVITY REGULATION</scope>
    <scope>MUTAGENESIS OF PRO-325; HIS-326; ASP-329; LEU-350 AND ARG-839</scope>
</reference>
<reference evidence="11 16 17" key="5">
    <citation type="journal article" date="2017" name="J. Biol. Chem.">
        <title>Polycomb repressive complex 2 in an autoinhibited state.</title>
        <authorList>
            <person name="Bratkowski M."/>
            <person name="Yang X."/>
            <person name="Liu X."/>
        </authorList>
    </citation>
    <scope>X-RAY CRYSTALLOGRAPHY (2.11 ANGSTROMS) OF 191-950 IN COMPLEX WITH S-ADENOSYL-L-METHIONINE AND ZN(2+)</scope>
    <scope>FUNCTION</scope>
    <scope>CATALYTIC ACTIVITY</scope>
    <scope>BIOPHYSICOCHEMICAL PROPERTIES</scope>
    <scope>ACTIVITY REGULATION</scope>
    <scope>MUTAGENESIS OF GLU-840; LYS-852 AND PHE-922</scope>
</reference>
<reference evidence="18 19 20" key="6">
    <citation type="journal article" date="2018" name="Sci. Rep.">
        <title>An evolutionarily conserved structural platform for PRC2 inhibition by a class of Ezh2 inhibitors.</title>
        <authorList>
            <person name="Bratkowski M."/>
            <person name="Yang X."/>
            <person name="Liu X."/>
        </authorList>
    </citation>
    <scope>X-RAY CRYSTALLOGRAPHY (2.28 ANGSTROMS) OF 191-950 IN COMPLEX WITH ZN(2+)</scope>
    <scope>FUNCTION</scope>
    <scope>CATALYTIC ACTIVITY</scope>
    <scope>ACTIVITY REGULATION</scope>
    <scope>SUBUNIT</scope>
</reference>
<comment type="function">
    <text evidence="5 6 7 8">Catalytic subunit of the of the Polycomb Repressive Complex 2 (PRC2), a histone H3 lysine methyltransferase responsible for generating mono-, di-, and tri-methylation on Lys27 (H3K27me1, H3K27me2 and H3K27me3) (PubMed:26472914, PubMed:28607149, PubMed:29904056). The tri-methylated form is known to be critical in gene repression, and its proper placement is essential in defining repression patterns during development (PubMed:26472914, PubMed:28607149, PubMed:29904056). The PRC2 complex interacts with thousands of RNA species in vivo, but the physiological function of RNA binding has still to be determined (PubMed:29185984).</text>
</comment>
<comment type="catalytic activity">
    <reaction evidence="5 6">
        <text>L-lysyl(27)-[histone H3] + 3 S-adenosyl-L-methionine = N(6),N(6),N(6)-trimethyl-L-lysyl(27)-[histone H3] + 3 S-adenosyl-L-homocysteine + 3 H(+)</text>
        <dbReference type="Rhea" id="RHEA:60292"/>
        <dbReference type="Rhea" id="RHEA-COMP:15535"/>
        <dbReference type="Rhea" id="RHEA-COMP:15548"/>
        <dbReference type="ChEBI" id="CHEBI:15378"/>
        <dbReference type="ChEBI" id="CHEBI:29969"/>
        <dbReference type="ChEBI" id="CHEBI:57856"/>
        <dbReference type="ChEBI" id="CHEBI:59789"/>
        <dbReference type="ChEBI" id="CHEBI:61961"/>
        <dbReference type="EC" id="2.1.1.356"/>
    </reaction>
    <physiologicalReaction direction="left-to-right" evidence="5 6">
        <dbReference type="Rhea" id="RHEA:60293"/>
    </physiologicalReaction>
</comment>
<comment type="activity regulation">
    <text evidence="5 6 8">The end product of PRC2 catalysis, H3K27me3, interacts with EED to stimulate the enzymatic activity of PRC2 allosterically (PubMed:26472914). The enzymatic activity of PRC2 is regulated in a very complex manner and PCR2 can adopt different stages including the autoinhibited (A); SAM-bound autoinhibited (A'), basal (B), and H3K27me3-stimulated (S) stages (PubMed:28607149). Actictivity is inhibited by pyridone inhibitors such as GSK126 (PubMed:29904056).</text>
</comment>
<comment type="biophysicochemical properties">
    <kinetics>
        <KM evidence="6">13 uM for H3K27me0 peptide substrate</KM>
        <KM evidence="6">29 uM for S-adenosyl-L-methionine</KM>
    </kinetics>
</comment>
<comment type="subunit">
    <text evidence="5 6">Component of the polycomb repressive complex 2 (PRC2) that consists of four core subunits icluding EZH2, EED, SUZ12, and RBBP4, among which EZH2 is the catalytic subunit and which minimally requires EED and SUZ12 for catalysis.</text>
</comment>
<comment type="subcellular location">
    <subcellularLocation>
        <location evidence="1">Nucleus</location>
    </subcellularLocation>
</comment>
<comment type="domain">
    <text evidence="5 7">Ten structurally and functionally discrete domains are dispersed across the entire active complex and compose an extended structural scaffold to accommodate juxtaposed EED and SUZ12. The N terminus forms an intramolecular interaction with the SANT1-like (SANT1L) domain and is referred to as the SANT1L-binding domain (SBD). The EED-binding domain (EBD) is found next to the SBD in the current structure, where the EBD similarly occupies a surface groove across the bottom face of the EED WD40 domain. Continuation of the EBD on the side face of EED leads to the beta-addition motif (BAM), consisting of three beta strands that are added to the beta-propeller fold of the WD40 repeats of EED. The BAM domainis involved in RNA-binding. Following the BAM, a loop region migrates away from the EED surface, extends to the back of the SET domain of the catalytic moiety, and is referred to as SET activation loop (SAL). The buried SAL emerges from between the SET domain and SUZ12 to directly connect to the stimulation-responsive motif (SRM), which sits on the stimulating peptide at the center of the top face of EED and forms a sandwich-like assembly with EED and the H3K27me3 peptide. Following the SRM, the SANT1L domain adopts a helix bundle structure and binds to the SBD. Together, the SBD, EBD, BAM, SAL, SRM, and SANT1L regions complete the belt-like structure of EZH2 that surrounds EED (PubMed:26472914). Entering the catalytic moiety, the SANT2-like (SANT2L) domain is linked to the SANT1L domain through the motif connecting SANT1L and SANT2L (MCSS), which harbors two helices, a zinc-binding motif, and a beta hairpin, and interacts with multiple surfaces. The SANT2L domain coordinates a zinc ion as well and is analogous to the SANT2 domain of human Ezh2 based on secondary-structure prediction. The CXC domain contains a Zn3Cys8His and a Zn3Cys9 cluster. The SET domain is positioned above EED and SUZ and adjacent to the SRM. The overall structure of the active ternary complex, and in particular the location of the catalytic domain, underlies allosteric modulation of the enzyme activity through various functional surfaces within the complex (PubMed:26472914, PubMed:29185984).</text>
</comment>
<comment type="similarity">
    <text evidence="10">Belongs to the class V-like SAM-binding methyltransferase superfamily. Histone-lysine methyltransferase family. EZ subfamily.</text>
</comment>
<dbReference type="EC" id="2.1.1.356" evidence="5 6"/>
<dbReference type="EMBL" id="GL988045">
    <property type="protein sequence ID" value="EGS18715.1"/>
    <property type="molecule type" value="Genomic_DNA"/>
</dbReference>
<dbReference type="RefSeq" id="XP_006695660.1">
    <property type="nucleotide sequence ID" value="XM_006695597.1"/>
</dbReference>
<dbReference type="PDB" id="5BJS">
    <property type="method" value="X-ray"/>
    <property type="resolution" value="2.19 A"/>
    <property type="chains" value="B=191-950"/>
</dbReference>
<dbReference type="PDB" id="5KJH">
    <property type="method" value="X-ray"/>
    <property type="resolution" value="2.27 A"/>
    <property type="chains" value="B=191-950"/>
</dbReference>
<dbReference type="PDB" id="5KJI">
    <property type="method" value="X-ray"/>
    <property type="resolution" value="2.71 A"/>
    <property type="chains" value="B=191-950"/>
</dbReference>
<dbReference type="PDB" id="5KKL">
    <property type="method" value="X-ray"/>
    <property type="resolution" value="2.94 A"/>
    <property type="chains" value="B=191-950"/>
</dbReference>
<dbReference type="PDB" id="5M5G">
    <property type="method" value="X-ray"/>
    <property type="resolution" value="2.27 A"/>
    <property type="chains" value="B=191-952"/>
</dbReference>
<dbReference type="PDB" id="5TQR">
    <property type="method" value="X-ray"/>
    <property type="resolution" value="2.57 A"/>
    <property type="chains" value="B=191-950"/>
</dbReference>
<dbReference type="PDB" id="5VK3">
    <property type="method" value="X-ray"/>
    <property type="resolution" value="2.11 A"/>
    <property type="chains" value="B=191-950"/>
</dbReference>
<dbReference type="PDB" id="5WF7">
    <property type="method" value="X-ray"/>
    <property type="resolution" value="2.50 A"/>
    <property type="chains" value="B=191-950"/>
</dbReference>
<dbReference type="PDB" id="5WFC">
    <property type="method" value="X-ray"/>
    <property type="resolution" value="2.28 A"/>
    <property type="chains" value="B=191-950"/>
</dbReference>
<dbReference type="PDB" id="5WFD">
    <property type="method" value="X-ray"/>
    <property type="resolution" value="2.65 A"/>
    <property type="chains" value="B=191-950"/>
</dbReference>
<dbReference type="PDBsum" id="5BJS"/>
<dbReference type="PDBsum" id="5KJH"/>
<dbReference type="PDBsum" id="5KJI"/>
<dbReference type="PDBsum" id="5KKL"/>
<dbReference type="PDBsum" id="5M5G"/>
<dbReference type="PDBsum" id="5TQR"/>
<dbReference type="PDBsum" id="5VK3"/>
<dbReference type="PDBsum" id="5WF7"/>
<dbReference type="PDBsum" id="5WFC"/>
<dbReference type="PDBsum" id="5WFD"/>
<dbReference type="SMR" id="G0SDW4"/>
<dbReference type="STRING" id="759272.G0SDW4"/>
<dbReference type="GeneID" id="18259361"/>
<dbReference type="KEGG" id="cthr:CTHT_0053230"/>
<dbReference type="eggNOG" id="KOG1079">
    <property type="taxonomic scope" value="Eukaryota"/>
</dbReference>
<dbReference type="HOGENOM" id="CLU_004089_0_0_1"/>
<dbReference type="OrthoDB" id="6141102at2759"/>
<dbReference type="Proteomes" id="UP000008066">
    <property type="component" value="Unassembled WGS sequence"/>
</dbReference>
<dbReference type="GO" id="GO:0005634">
    <property type="term" value="C:nucleus"/>
    <property type="evidence" value="ECO:0007669"/>
    <property type="project" value="UniProtKB-SubCell"/>
</dbReference>
<dbReference type="GO" id="GO:0003682">
    <property type="term" value="F:chromatin binding"/>
    <property type="evidence" value="ECO:0007669"/>
    <property type="project" value="TreeGrafter"/>
</dbReference>
<dbReference type="GO" id="GO:0046976">
    <property type="term" value="F:histone H3K27 methyltransferase activity"/>
    <property type="evidence" value="ECO:0007669"/>
    <property type="project" value="TreeGrafter"/>
</dbReference>
<dbReference type="GO" id="GO:0046872">
    <property type="term" value="F:metal ion binding"/>
    <property type="evidence" value="ECO:0007669"/>
    <property type="project" value="UniProtKB-KW"/>
</dbReference>
<dbReference type="GO" id="GO:0031507">
    <property type="term" value="P:heterochromatin formation"/>
    <property type="evidence" value="ECO:0007669"/>
    <property type="project" value="TreeGrafter"/>
</dbReference>
<dbReference type="GO" id="GO:0032259">
    <property type="term" value="P:methylation"/>
    <property type="evidence" value="ECO:0007669"/>
    <property type="project" value="UniProtKB-KW"/>
</dbReference>
<dbReference type="CDD" id="cd19168">
    <property type="entry name" value="SET_EZH-like"/>
    <property type="match status" value="1"/>
</dbReference>
<dbReference type="Gene3D" id="2.170.270.10">
    <property type="entry name" value="SET domain"/>
    <property type="match status" value="1"/>
</dbReference>
<dbReference type="IDEAL" id="IID50297"/>
<dbReference type="InterPro" id="IPR026489">
    <property type="entry name" value="CXC_dom"/>
</dbReference>
<dbReference type="InterPro" id="IPR045318">
    <property type="entry name" value="EZH1/2-like"/>
</dbReference>
<dbReference type="InterPro" id="IPR048360">
    <property type="entry name" value="Ezh2_CXC_fung"/>
</dbReference>
<dbReference type="InterPro" id="IPR040968">
    <property type="entry name" value="EZH2_MCSS_fung"/>
</dbReference>
<dbReference type="InterPro" id="IPR040595">
    <property type="entry name" value="EZH2_N"/>
</dbReference>
<dbReference type="InterPro" id="IPR001214">
    <property type="entry name" value="SET_dom"/>
</dbReference>
<dbReference type="InterPro" id="IPR046341">
    <property type="entry name" value="SET_dom_sf"/>
</dbReference>
<dbReference type="PANTHER" id="PTHR45747">
    <property type="entry name" value="HISTONE-LYSINE N-METHYLTRANSFERASE E(Z)"/>
    <property type="match status" value="1"/>
</dbReference>
<dbReference type="PANTHER" id="PTHR45747:SF4">
    <property type="entry name" value="HISTONE-LYSINE N-METHYLTRANSFERASE E(Z)"/>
    <property type="match status" value="1"/>
</dbReference>
<dbReference type="Pfam" id="PF21509">
    <property type="entry name" value="Ezh2-like__CXC_fung"/>
    <property type="match status" value="1"/>
</dbReference>
<dbReference type="Pfam" id="PF18600">
    <property type="entry name" value="Ezh2_MCSS_fung"/>
    <property type="match status" value="1"/>
</dbReference>
<dbReference type="Pfam" id="PF18601">
    <property type="entry name" value="EZH2_N"/>
    <property type="match status" value="1"/>
</dbReference>
<dbReference type="Pfam" id="PF00856">
    <property type="entry name" value="SET"/>
    <property type="match status" value="1"/>
</dbReference>
<dbReference type="SMART" id="SM00317">
    <property type="entry name" value="SET"/>
    <property type="match status" value="1"/>
</dbReference>
<dbReference type="SUPFAM" id="SSF82199">
    <property type="entry name" value="SET domain"/>
    <property type="match status" value="1"/>
</dbReference>
<dbReference type="PROSITE" id="PS51633">
    <property type="entry name" value="CXC"/>
    <property type="match status" value="1"/>
</dbReference>
<dbReference type="PROSITE" id="PS50280">
    <property type="entry name" value="SET"/>
    <property type="match status" value="1"/>
</dbReference>